<name>HTPG_METFK</name>
<keyword id="KW-0067">ATP-binding</keyword>
<keyword id="KW-0143">Chaperone</keyword>
<keyword id="KW-0963">Cytoplasm</keyword>
<keyword id="KW-0547">Nucleotide-binding</keyword>
<keyword id="KW-1185">Reference proteome</keyword>
<keyword id="KW-0346">Stress response</keyword>
<reference key="1">
    <citation type="submission" date="2006-03" db="EMBL/GenBank/DDBJ databases">
        <title>Complete sequence of Methylobacillus flagellatus KT.</title>
        <authorList>
            <consortium name="US DOE Joint Genome Institute"/>
            <person name="Copeland A."/>
            <person name="Lucas S."/>
            <person name="Lapidus A."/>
            <person name="Barry K."/>
            <person name="Detter J.C."/>
            <person name="Glavina del Rio T."/>
            <person name="Hammon N."/>
            <person name="Israni S."/>
            <person name="Dalin E."/>
            <person name="Tice H."/>
            <person name="Pitluck S."/>
            <person name="Brettin T."/>
            <person name="Bruce D."/>
            <person name="Han C."/>
            <person name="Tapia R."/>
            <person name="Saunders E."/>
            <person name="Gilna P."/>
            <person name="Schmutz J."/>
            <person name="Larimer F."/>
            <person name="Land M."/>
            <person name="Kyrpides N."/>
            <person name="Anderson I."/>
            <person name="Richardson P."/>
        </authorList>
    </citation>
    <scope>NUCLEOTIDE SEQUENCE [LARGE SCALE GENOMIC DNA]</scope>
    <source>
        <strain>ATCC 51484 / DSM 6875 / VKM B-1610 / KT</strain>
    </source>
</reference>
<dbReference type="EMBL" id="CP000284">
    <property type="protein sequence ID" value="ABE49285.1"/>
    <property type="molecule type" value="Genomic_DNA"/>
</dbReference>
<dbReference type="EMBL" id="CP000284">
    <property type="protein sequence ID" value="ABE49141.1"/>
    <property type="molecule type" value="Genomic_DNA"/>
</dbReference>
<dbReference type="RefSeq" id="WP_011479238.1">
    <property type="nucleotide sequence ID" value="NC_007947.1"/>
</dbReference>
<dbReference type="SMR" id="Q1H2K2"/>
<dbReference type="STRING" id="265072.Mfla_0873"/>
<dbReference type="KEGG" id="mfa:Mfla_0873"/>
<dbReference type="KEGG" id="mfa:Mfla_1017"/>
<dbReference type="eggNOG" id="COG0326">
    <property type="taxonomic scope" value="Bacteria"/>
</dbReference>
<dbReference type="HOGENOM" id="CLU_006684_3_0_4"/>
<dbReference type="OrthoDB" id="9802640at2"/>
<dbReference type="Proteomes" id="UP000002440">
    <property type="component" value="Chromosome"/>
</dbReference>
<dbReference type="GO" id="GO:0005737">
    <property type="term" value="C:cytoplasm"/>
    <property type="evidence" value="ECO:0007669"/>
    <property type="project" value="UniProtKB-SubCell"/>
</dbReference>
<dbReference type="GO" id="GO:0005524">
    <property type="term" value="F:ATP binding"/>
    <property type="evidence" value="ECO:0007669"/>
    <property type="project" value="UniProtKB-UniRule"/>
</dbReference>
<dbReference type="GO" id="GO:0016887">
    <property type="term" value="F:ATP hydrolysis activity"/>
    <property type="evidence" value="ECO:0007669"/>
    <property type="project" value="InterPro"/>
</dbReference>
<dbReference type="GO" id="GO:0140662">
    <property type="term" value="F:ATP-dependent protein folding chaperone"/>
    <property type="evidence" value="ECO:0007669"/>
    <property type="project" value="InterPro"/>
</dbReference>
<dbReference type="GO" id="GO:0051082">
    <property type="term" value="F:unfolded protein binding"/>
    <property type="evidence" value="ECO:0007669"/>
    <property type="project" value="UniProtKB-UniRule"/>
</dbReference>
<dbReference type="CDD" id="cd16927">
    <property type="entry name" value="HATPase_Hsp90-like"/>
    <property type="match status" value="1"/>
</dbReference>
<dbReference type="FunFam" id="3.30.230.80:FF:000002">
    <property type="entry name" value="Molecular chaperone HtpG"/>
    <property type="match status" value="1"/>
</dbReference>
<dbReference type="FunFam" id="3.30.565.10:FF:000009">
    <property type="entry name" value="Molecular chaperone HtpG"/>
    <property type="match status" value="1"/>
</dbReference>
<dbReference type="Gene3D" id="3.30.230.80">
    <property type="match status" value="1"/>
</dbReference>
<dbReference type="Gene3D" id="3.40.50.11260">
    <property type="match status" value="1"/>
</dbReference>
<dbReference type="Gene3D" id="1.20.120.790">
    <property type="entry name" value="Heat shock protein 90, C-terminal domain"/>
    <property type="match status" value="1"/>
</dbReference>
<dbReference type="Gene3D" id="3.30.565.10">
    <property type="entry name" value="Histidine kinase-like ATPase, C-terminal domain"/>
    <property type="match status" value="1"/>
</dbReference>
<dbReference type="HAMAP" id="MF_00505">
    <property type="entry name" value="HSP90"/>
    <property type="match status" value="1"/>
</dbReference>
<dbReference type="InterPro" id="IPR036890">
    <property type="entry name" value="HATPase_C_sf"/>
</dbReference>
<dbReference type="InterPro" id="IPR037196">
    <property type="entry name" value="HSP90_C"/>
</dbReference>
<dbReference type="InterPro" id="IPR001404">
    <property type="entry name" value="Hsp90_fam"/>
</dbReference>
<dbReference type="InterPro" id="IPR020575">
    <property type="entry name" value="Hsp90_N"/>
</dbReference>
<dbReference type="InterPro" id="IPR020568">
    <property type="entry name" value="Ribosomal_Su5_D2-typ_SF"/>
</dbReference>
<dbReference type="NCBIfam" id="NF003555">
    <property type="entry name" value="PRK05218.1"/>
    <property type="match status" value="1"/>
</dbReference>
<dbReference type="PANTHER" id="PTHR11528">
    <property type="entry name" value="HEAT SHOCK PROTEIN 90 FAMILY MEMBER"/>
    <property type="match status" value="1"/>
</dbReference>
<dbReference type="Pfam" id="PF13589">
    <property type="entry name" value="HATPase_c_3"/>
    <property type="match status" value="1"/>
</dbReference>
<dbReference type="Pfam" id="PF00183">
    <property type="entry name" value="HSP90"/>
    <property type="match status" value="1"/>
</dbReference>
<dbReference type="PIRSF" id="PIRSF002583">
    <property type="entry name" value="Hsp90"/>
    <property type="match status" value="1"/>
</dbReference>
<dbReference type="PRINTS" id="PR00775">
    <property type="entry name" value="HEATSHOCK90"/>
</dbReference>
<dbReference type="SMART" id="SM00387">
    <property type="entry name" value="HATPase_c"/>
    <property type="match status" value="1"/>
</dbReference>
<dbReference type="SUPFAM" id="SSF55874">
    <property type="entry name" value="ATPase domain of HSP90 chaperone/DNA topoisomerase II/histidine kinase"/>
    <property type="match status" value="1"/>
</dbReference>
<dbReference type="SUPFAM" id="SSF110942">
    <property type="entry name" value="HSP90 C-terminal domain"/>
    <property type="match status" value="1"/>
</dbReference>
<dbReference type="SUPFAM" id="SSF54211">
    <property type="entry name" value="Ribosomal protein S5 domain 2-like"/>
    <property type="match status" value="1"/>
</dbReference>
<sequence length="628" mass="71062">MSTETLQKETLGFQAEVKQLLQLMIHSLYSNKEIVLRELISNASDAADKLRFEALADNSLYGNDSDLKIRVSFDKQARTITISDNGIGMSREEVINNIGTIAKSGTKEFLQSLTGDQAKDANLIGQFGVGFYSAFIIADKVTLTTRRAGSNEAVRWESTGEGDYTLEPAEKESRGTDIVLHLREGEDEFLNDWKLKSIIRKYSDHITLPIVMKKSEWKDGEQVPTDEDETVNKASALWARNKSDISEQEYQEFYKHVSHDFENPLTWSHNRVEGKQEYISLLYIPSKAPFDLYDRERQHGIKLYVKRVFIMDDAEQLMPQYLRFVRGVIDSADLPLNVSREILQHSKDIEAIKTASVKRVLSMLEDLAENKPEEYAKFWKEFGRVLKEGPGEDFANKERIAGLLRFASTHADTDEQVVSFKDYIARMKEGQEAIYYITADSFAAAKHSPHLEIFRKKGIEVLLLSDRVDEWLVSSLTEFDGKKLQSVAKGDLDLGKLEDEAEKEQQKKTEDEYKPLVERIQAALGDSVKEVRVTHRLTDSPACLVAGEHDLSGNLERLLKAAGQKTPGSKPILEINPDHGIVQRLKDVTDEAKFADWAHLLFDQALLAEGGQLEDPAAFVRRVNAMLA</sequence>
<evidence type="ECO:0000255" key="1">
    <source>
        <dbReference type="HAMAP-Rule" id="MF_00505"/>
    </source>
</evidence>
<proteinExistence type="inferred from homology"/>
<comment type="function">
    <text evidence="1">Molecular chaperone. Has ATPase activity.</text>
</comment>
<comment type="subunit">
    <text evidence="1">Homodimer.</text>
</comment>
<comment type="subcellular location">
    <subcellularLocation>
        <location evidence="1">Cytoplasm</location>
    </subcellularLocation>
</comment>
<comment type="similarity">
    <text evidence="1">Belongs to the heat shock protein 90 family.</text>
</comment>
<accession>Q1H2K2</accession>
<organism>
    <name type="scientific">Methylobacillus flagellatus (strain ATCC 51484 / DSM 6875 / VKM B-1610 / KT)</name>
    <dbReference type="NCBI Taxonomy" id="265072"/>
    <lineage>
        <taxon>Bacteria</taxon>
        <taxon>Pseudomonadati</taxon>
        <taxon>Pseudomonadota</taxon>
        <taxon>Betaproteobacteria</taxon>
        <taxon>Nitrosomonadales</taxon>
        <taxon>Methylophilaceae</taxon>
        <taxon>Methylobacillus</taxon>
    </lineage>
</organism>
<feature type="chain" id="PRO_0000258514" description="Chaperone protein HtpG">
    <location>
        <begin position="1"/>
        <end position="628"/>
    </location>
</feature>
<feature type="region of interest" description="A; substrate-binding" evidence="1">
    <location>
        <begin position="1"/>
        <end position="340"/>
    </location>
</feature>
<feature type="region of interest" description="B" evidence="1">
    <location>
        <begin position="341"/>
        <end position="557"/>
    </location>
</feature>
<feature type="region of interest" description="C" evidence="1">
    <location>
        <begin position="558"/>
        <end position="628"/>
    </location>
</feature>
<protein>
    <recommendedName>
        <fullName evidence="1">Chaperone protein HtpG</fullName>
    </recommendedName>
    <alternativeName>
        <fullName evidence="1">Heat shock protein HtpG</fullName>
    </alternativeName>
    <alternativeName>
        <fullName evidence="1">High temperature protein G</fullName>
    </alternativeName>
</protein>
<gene>
    <name evidence="1" type="primary">htpG1</name>
    <name type="ordered locus">Mfla_0873</name>
</gene>
<gene>
    <name evidence="1" type="primary">htpG2</name>
    <name type="ordered locus">Mfla_1017</name>
</gene>